<reference key="1">
    <citation type="journal article" date="2005" name="Genome Res.">
        <title>Coping with cold: the genome of the versatile marine Antarctica bacterium Pseudoalteromonas haloplanktis TAC125.</title>
        <authorList>
            <person name="Medigue C."/>
            <person name="Krin E."/>
            <person name="Pascal G."/>
            <person name="Barbe V."/>
            <person name="Bernsel A."/>
            <person name="Bertin P.N."/>
            <person name="Cheung F."/>
            <person name="Cruveiller S."/>
            <person name="D'Amico S."/>
            <person name="Duilio A."/>
            <person name="Fang G."/>
            <person name="Feller G."/>
            <person name="Ho C."/>
            <person name="Mangenot S."/>
            <person name="Marino G."/>
            <person name="Nilsson J."/>
            <person name="Parrilli E."/>
            <person name="Rocha E.P.C."/>
            <person name="Rouy Z."/>
            <person name="Sekowska A."/>
            <person name="Tutino M.L."/>
            <person name="Vallenet D."/>
            <person name="von Heijne G."/>
            <person name="Danchin A."/>
        </authorList>
    </citation>
    <scope>NUCLEOTIDE SEQUENCE [LARGE SCALE GENOMIC DNA]</scope>
    <source>
        <strain>TAC 125</strain>
    </source>
</reference>
<protein>
    <recommendedName>
        <fullName evidence="2">D-alanine--D-alanine ligase</fullName>
        <ecNumber evidence="2">6.3.2.4</ecNumber>
    </recommendedName>
    <alternativeName>
        <fullName evidence="2">D-Ala-D-Ala ligase</fullName>
    </alternativeName>
    <alternativeName>
        <fullName evidence="2">D-alanylalanine synthetase</fullName>
    </alternativeName>
</protein>
<organism>
    <name type="scientific">Pseudoalteromonas translucida (strain TAC 125)</name>
    <dbReference type="NCBI Taxonomy" id="326442"/>
    <lineage>
        <taxon>Bacteria</taxon>
        <taxon>Pseudomonadati</taxon>
        <taxon>Pseudomonadota</taxon>
        <taxon>Gammaproteobacteria</taxon>
        <taxon>Alteromonadales</taxon>
        <taxon>Pseudoalteromonadaceae</taxon>
        <taxon>Pseudoalteromonas</taxon>
    </lineage>
</organism>
<evidence type="ECO:0000250" key="1"/>
<evidence type="ECO:0000255" key="2">
    <source>
        <dbReference type="HAMAP-Rule" id="MF_00047"/>
    </source>
</evidence>
<accession>Q3IFY2</accession>
<sequence>MTQLNTQFGKVAVLLGGNSAEREVSLRSGQAVLNALQNHGINAIAFDPKERPLWELNELAIDRVFIALHGRGGEDGTVQGALEFMNLPYTGSNVLGSALAMDKVRCKHLFKSAGLSTAPYTVVDAKKGFDAAAIMQQFKKVMVKPSHEGSSIGMAQASTPQELEDALSNAFKFDSQVLVEQWISGREFTITVLGDEVLPVIEMTTPNGFYDYQAKYQATTTQYHCPADLSPADTEHLQAMALDAFDLVGASGWGRVDAMQDQQGNFYLLEVNTVPGMTEKSLVPMAAKAHGASFEQLVVRILEQTL</sequence>
<feature type="chain" id="PRO_0000341154" description="D-alanine--D-alanine ligase">
    <location>
        <begin position="1"/>
        <end position="306"/>
    </location>
</feature>
<feature type="domain" description="ATP-grasp" evidence="2">
    <location>
        <begin position="107"/>
        <end position="303"/>
    </location>
</feature>
<feature type="binding site" evidence="2">
    <location>
        <begin position="134"/>
        <end position="189"/>
    </location>
    <ligand>
        <name>ATP</name>
        <dbReference type="ChEBI" id="CHEBI:30616"/>
    </ligand>
</feature>
<feature type="binding site" evidence="2">
    <location>
        <position position="257"/>
    </location>
    <ligand>
        <name>Mg(2+)</name>
        <dbReference type="ChEBI" id="CHEBI:18420"/>
        <label>1</label>
    </ligand>
</feature>
<feature type="binding site" evidence="2">
    <location>
        <position position="270"/>
    </location>
    <ligand>
        <name>Mg(2+)</name>
        <dbReference type="ChEBI" id="CHEBI:18420"/>
        <label>1</label>
    </ligand>
</feature>
<feature type="binding site" evidence="2">
    <location>
        <position position="270"/>
    </location>
    <ligand>
        <name>Mg(2+)</name>
        <dbReference type="ChEBI" id="CHEBI:18420"/>
        <label>2</label>
    </ligand>
</feature>
<feature type="binding site" evidence="2">
    <location>
        <position position="272"/>
    </location>
    <ligand>
        <name>Mg(2+)</name>
        <dbReference type="ChEBI" id="CHEBI:18420"/>
        <label>2</label>
    </ligand>
</feature>
<name>DDL_PSET1</name>
<comment type="function">
    <text evidence="2">Cell wall formation.</text>
</comment>
<comment type="catalytic activity">
    <reaction evidence="2">
        <text>2 D-alanine + ATP = D-alanyl-D-alanine + ADP + phosphate + H(+)</text>
        <dbReference type="Rhea" id="RHEA:11224"/>
        <dbReference type="ChEBI" id="CHEBI:15378"/>
        <dbReference type="ChEBI" id="CHEBI:30616"/>
        <dbReference type="ChEBI" id="CHEBI:43474"/>
        <dbReference type="ChEBI" id="CHEBI:57416"/>
        <dbReference type="ChEBI" id="CHEBI:57822"/>
        <dbReference type="ChEBI" id="CHEBI:456216"/>
        <dbReference type="EC" id="6.3.2.4"/>
    </reaction>
</comment>
<comment type="cofactor">
    <cofactor evidence="1">
        <name>Mg(2+)</name>
        <dbReference type="ChEBI" id="CHEBI:18420"/>
    </cofactor>
    <cofactor evidence="1">
        <name>Mn(2+)</name>
        <dbReference type="ChEBI" id="CHEBI:29035"/>
    </cofactor>
    <text evidence="1">Binds 2 magnesium or manganese ions per subunit.</text>
</comment>
<comment type="pathway">
    <text evidence="2">Cell wall biogenesis; peptidoglycan biosynthesis.</text>
</comment>
<comment type="subcellular location">
    <subcellularLocation>
        <location evidence="2">Cytoplasm</location>
    </subcellularLocation>
</comment>
<comment type="similarity">
    <text evidence="2">Belongs to the D-alanine--D-alanine ligase family.</text>
</comment>
<proteinExistence type="inferred from homology"/>
<dbReference type="EC" id="6.3.2.4" evidence="2"/>
<dbReference type="EMBL" id="CR954246">
    <property type="protein sequence ID" value="CAI87550.1"/>
    <property type="molecule type" value="Genomic_DNA"/>
</dbReference>
<dbReference type="SMR" id="Q3IFY2"/>
<dbReference type="STRING" id="326442.PSHAa2502"/>
<dbReference type="KEGG" id="pha:PSHAa2502"/>
<dbReference type="PATRIC" id="fig|326442.8.peg.2412"/>
<dbReference type="eggNOG" id="COG1181">
    <property type="taxonomic scope" value="Bacteria"/>
</dbReference>
<dbReference type="HOGENOM" id="CLU_039268_1_2_6"/>
<dbReference type="BioCyc" id="PHAL326442:PSHA_RS12320-MONOMER"/>
<dbReference type="UniPathway" id="UPA00219"/>
<dbReference type="Proteomes" id="UP000006843">
    <property type="component" value="Chromosome I"/>
</dbReference>
<dbReference type="GO" id="GO:0005829">
    <property type="term" value="C:cytosol"/>
    <property type="evidence" value="ECO:0007669"/>
    <property type="project" value="TreeGrafter"/>
</dbReference>
<dbReference type="GO" id="GO:0005524">
    <property type="term" value="F:ATP binding"/>
    <property type="evidence" value="ECO:0007669"/>
    <property type="project" value="UniProtKB-KW"/>
</dbReference>
<dbReference type="GO" id="GO:0008716">
    <property type="term" value="F:D-alanine-D-alanine ligase activity"/>
    <property type="evidence" value="ECO:0007669"/>
    <property type="project" value="UniProtKB-UniRule"/>
</dbReference>
<dbReference type="GO" id="GO:0046872">
    <property type="term" value="F:metal ion binding"/>
    <property type="evidence" value="ECO:0007669"/>
    <property type="project" value="UniProtKB-KW"/>
</dbReference>
<dbReference type="GO" id="GO:0071555">
    <property type="term" value="P:cell wall organization"/>
    <property type="evidence" value="ECO:0007669"/>
    <property type="project" value="UniProtKB-KW"/>
</dbReference>
<dbReference type="GO" id="GO:0009252">
    <property type="term" value="P:peptidoglycan biosynthetic process"/>
    <property type="evidence" value="ECO:0007669"/>
    <property type="project" value="UniProtKB-UniRule"/>
</dbReference>
<dbReference type="GO" id="GO:0008360">
    <property type="term" value="P:regulation of cell shape"/>
    <property type="evidence" value="ECO:0007669"/>
    <property type="project" value="UniProtKB-KW"/>
</dbReference>
<dbReference type="FunFam" id="3.30.470.20:FF:000008">
    <property type="entry name" value="D-alanine--D-alanine ligase"/>
    <property type="match status" value="1"/>
</dbReference>
<dbReference type="FunFam" id="3.40.50.20:FF:000013">
    <property type="entry name" value="D-alanine--D-alanine ligase"/>
    <property type="match status" value="1"/>
</dbReference>
<dbReference type="Gene3D" id="3.40.50.20">
    <property type="match status" value="1"/>
</dbReference>
<dbReference type="Gene3D" id="3.30.1490.20">
    <property type="entry name" value="ATP-grasp fold, A domain"/>
    <property type="match status" value="1"/>
</dbReference>
<dbReference type="Gene3D" id="3.30.470.20">
    <property type="entry name" value="ATP-grasp fold, B domain"/>
    <property type="match status" value="1"/>
</dbReference>
<dbReference type="HAMAP" id="MF_00047">
    <property type="entry name" value="Dala_Dala_lig"/>
    <property type="match status" value="1"/>
</dbReference>
<dbReference type="InterPro" id="IPR011761">
    <property type="entry name" value="ATP-grasp"/>
</dbReference>
<dbReference type="InterPro" id="IPR013815">
    <property type="entry name" value="ATP_grasp_subdomain_1"/>
</dbReference>
<dbReference type="InterPro" id="IPR000291">
    <property type="entry name" value="D-Ala_lig_Van_CS"/>
</dbReference>
<dbReference type="InterPro" id="IPR005905">
    <property type="entry name" value="D_ala_D_ala"/>
</dbReference>
<dbReference type="InterPro" id="IPR011095">
    <property type="entry name" value="Dala_Dala_lig_C"/>
</dbReference>
<dbReference type="InterPro" id="IPR011127">
    <property type="entry name" value="Dala_Dala_lig_N"/>
</dbReference>
<dbReference type="InterPro" id="IPR016185">
    <property type="entry name" value="PreATP-grasp_dom_sf"/>
</dbReference>
<dbReference type="NCBIfam" id="TIGR01205">
    <property type="entry name" value="D_ala_D_alaTIGR"/>
    <property type="match status" value="1"/>
</dbReference>
<dbReference type="NCBIfam" id="NF002378">
    <property type="entry name" value="PRK01372.1"/>
    <property type="match status" value="1"/>
</dbReference>
<dbReference type="PANTHER" id="PTHR23132">
    <property type="entry name" value="D-ALANINE--D-ALANINE LIGASE"/>
    <property type="match status" value="1"/>
</dbReference>
<dbReference type="PANTHER" id="PTHR23132:SF23">
    <property type="entry name" value="D-ALANINE--D-ALANINE LIGASE B"/>
    <property type="match status" value="1"/>
</dbReference>
<dbReference type="Pfam" id="PF07478">
    <property type="entry name" value="Dala_Dala_lig_C"/>
    <property type="match status" value="1"/>
</dbReference>
<dbReference type="Pfam" id="PF01820">
    <property type="entry name" value="Dala_Dala_lig_N"/>
    <property type="match status" value="1"/>
</dbReference>
<dbReference type="PIRSF" id="PIRSF039102">
    <property type="entry name" value="Ddl/VanB"/>
    <property type="match status" value="1"/>
</dbReference>
<dbReference type="SUPFAM" id="SSF56059">
    <property type="entry name" value="Glutathione synthetase ATP-binding domain-like"/>
    <property type="match status" value="1"/>
</dbReference>
<dbReference type="SUPFAM" id="SSF52440">
    <property type="entry name" value="PreATP-grasp domain"/>
    <property type="match status" value="1"/>
</dbReference>
<dbReference type="PROSITE" id="PS50975">
    <property type="entry name" value="ATP_GRASP"/>
    <property type="match status" value="1"/>
</dbReference>
<dbReference type="PROSITE" id="PS00843">
    <property type="entry name" value="DALA_DALA_LIGASE_1"/>
    <property type="match status" value="1"/>
</dbReference>
<dbReference type="PROSITE" id="PS00844">
    <property type="entry name" value="DALA_DALA_LIGASE_2"/>
    <property type="match status" value="1"/>
</dbReference>
<keyword id="KW-0067">ATP-binding</keyword>
<keyword id="KW-0133">Cell shape</keyword>
<keyword id="KW-0961">Cell wall biogenesis/degradation</keyword>
<keyword id="KW-0963">Cytoplasm</keyword>
<keyword id="KW-0436">Ligase</keyword>
<keyword id="KW-0460">Magnesium</keyword>
<keyword id="KW-0464">Manganese</keyword>
<keyword id="KW-0479">Metal-binding</keyword>
<keyword id="KW-0547">Nucleotide-binding</keyword>
<keyword id="KW-0573">Peptidoglycan synthesis</keyword>
<keyword id="KW-1185">Reference proteome</keyword>
<gene>
    <name evidence="2" type="primary">ddl</name>
    <name type="ordered locus">PSHAa2502</name>
</gene>